<reference key="1">
    <citation type="submission" date="2006-06" db="EMBL/GenBank/DDBJ databases">
        <title>Complete sequence of Rubrobacter xylanophilus DSM 9941.</title>
        <authorList>
            <consortium name="US DOE Joint Genome Institute"/>
            <person name="Copeland A."/>
            <person name="Lucas S."/>
            <person name="Lapidus A."/>
            <person name="Barry K."/>
            <person name="Detter J.C."/>
            <person name="Glavina del Rio T."/>
            <person name="Hammon N."/>
            <person name="Israni S."/>
            <person name="Dalin E."/>
            <person name="Tice H."/>
            <person name="Pitluck S."/>
            <person name="Munk A.C."/>
            <person name="Brettin T."/>
            <person name="Bruce D."/>
            <person name="Han C."/>
            <person name="Tapia R."/>
            <person name="Gilna P."/>
            <person name="Schmutz J."/>
            <person name="Larimer F."/>
            <person name="Land M."/>
            <person name="Hauser L."/>
            <person name="Kyrpides N."/>
            <person name="Lykidis A."/>
            <person name="da Costa M.S."/>
            <person name="Rainey F.A."/>
            <person name="Empadinhas N."/>
            <person name="Jolivet E."/>
            <person name="Battista J.R."/>
            <person name="Richardson P."/>
        </authorList>
    </citation>
    <scope>NUCLEOTIDE SEQUENCE [LARGE SCALE GENOMIC DNA]</scope>
    <source>
        <strain>DSM 9941 / JCM 11954 / NBRC 16129 / PRD-1</strain>
    </source>
</reference>
<protein>
    <recommendedName>
        <fullName evidence="1">Glutamyl-tRNA(Gln) amidotransferase subunit A</fullName>
        <shortName evidence="1">Glu-ADT subunit A</shortName>
        <ecNumber evidence="1">6.3.5.7</ecNumber>
    </recommendedName>
</protein>
<proteinExistence type="inferred from homology"/>
<sequence length="481" mass="51308">MLELSAFELAERVLAREVSASEAAAAANARVEEVEGDLNSFITGTPELALERAARVDERLRRGEEVRPWECVPIAVKDVLSTRGVRTTCGSRILENFEPVYEASALLSFGPDPIMVGKANMDEFAMGSSTENSAYGPTRNPWDLSRVPGGSSGGSAAAVAAGQGWWALGTDTGGSVRQPASFCGLVGLKPTYGRVSRYGLIAFASSLDQIGPMTRDVRDAALLLQAIAGHDPKDSTSAGVEVPDYLSGLERGVEGLRVGIVRELVEAEGVEGEVREISLRTARALEEAGARVGEVSLPHAGYGLPAYYIIAPAEVSSNLARYDGVRYGLRVPADGVHEMYRRTRERGFGDEVKRRIMLGTYALSAGYYEAYYGQAQKVRTRIIEDFRNAFSGYDVLLSPTCPTTAFGLGEKVDDPLAMYANDICAVPASLAGIPAISVPGGLSGGLPVGVQLMGDYFSEPTLLRAARAAEQASGLRFRLKP</sequence>
<accession>Q1AXT0</accession>
<evidence type="ECO:0000255" key="1">
    <source>
        <dbReference type="HAMAP-Rule" id="MF_00120"/>
    </source>
</evidence>
<gene>
    <name evidence="1" type="primary">gatA</name>
    <name type="ordered locus">Rxyl_0830</name>
</gene>
<dbReference type="EC" id="6.3.5.7" evidence="1"/>
<dbReference type="EMBL" id="CP000386">
    <property type="protein sequence ID" value="ABG03798.1"/>
    <property type="molecule type" value="Genomic_DNA"/>
</dbReference>
<dbReference type="RefSeq" id="WP_011563816.1">
    <property type="nucleotide sequence ID" value="NC_008148.1"/>
</dbReference>
<dbReference type="SMR" id="Q1AXT0"/>
<dbReference type="STRING" id="266117.Rxyl_0830"/>
<dbReference type="KEGG" id="rxy:Rxyl_0830"/>
<dbReference type="eggNOG" id="COG0154">
    <property type="taxonomic scope" value="Bacteria"/>
</dbReference>
<dbReference type="HOGENOM" id="CLU_009600_0_3_11"/>
<dbReference type="OrthoDB" id="9811471at2"/>
<dbReference type="PhylomeDB" id="Q1AXT0"/>
<dbReference type="Proteomes" id="UP000006637">
    <property type="component" value="Chromosome"/>
</dbReference>
<dbReference type="GO" id="GO:0030956">
    <property type="term" value="C:glutamyl-tRNA(Gln) amidotransferase complex"/>
    <property type="evidence" value="ECO:0007669"/>
    <property type="project" value="InterPro"/>
</dbReference>
<dbReference type="GO" id="GO:0005524">
    <property type="term" value="F:ATP binding"/>
    <property type="evidence" value="ECO:0007669"/>
    <property type="project" value="UniProtKB-KW"/>
</dbReference>
<dbReference type="GO" id="GO:0050567">
    <property type="term" value="F:glutaminyl-tRNA synthase (glutamine-hydrolyzing) activity"/>
    <property type="evidence" value="ECO:0007669"/>
    <property type="project" value="UniProtKB-UniRule"/>
</dbReference>
<dbReference type="GO" id="GO:0006412">
    <property type="term" value="P:translation"/>
    <property type="evidence" value="ECO:0007669"/>
    <property type="project" value="UniProtKB-UniRule"/>
</dbReference>
<dbReference type="Gene3D" id="3.90.1300.10">
    <property type="entry name" value="Amidase signature (AS) domain"/>
    <property type="match status" value="1"/>
</dbReference>
<dbReference type="HAMAP" id="MF_00120">
    <property type="entry name" value="GatA"/>
    <property type="match status" value="1"/>
</dbReference>
<dbReference type="InterPro" id="IPR000120">
    <property type="entry name" value="Amidase"/>
</dbReference>
<dbReference type="InterPro" id="IPR020556">
    <property type="entry name" value="Amidase_CS"/>
</dbReference>
<dbReference type="InterPro" id="IPR023631">
    <property type="entry name" value="Amidase_dom"/>
</dbReference>
<dbReference type="InterPro" id="IPR036928">
    <property type="entry name" value="AS_sf"/>
</dbReference>
<dbReference type="InterPro" id="IPR004412">
    <property type="entry name" value="GatA"/>
</dbReference>
<dbReference type="NCBIfam" id="TIGR00132">
    <property type="entry name" value="gatA"/>
    <property type="match status" value="1"/>
</dbReference>
<dbReference type="PANTHER" id="PTHR11895:SF151">
    <property type="entry name" value="GLUTAMYL-TRNA(GLN) AMIDOTRANSFERASE SUBUNIT A"/>
    <property type="match status" value="1"/>
</dbReference>
<dbReference type="PANTHER" id="PTHR11895">
    <property type="entry name" value="TRANSAMIDASE"/>
    <property type="match status" value="1"/>
</dbReference>
<dbReference type="Pfam" id="PF01425">
    <property type="entry name" value="Amidase"/>
    <property type="match status" value="1"/>
</dbReference>
<dbReference type="SUPFAM" id="SSF75304">
    <property type="entry name" value="Amidase signature (AS) enzymes"/>
    <property type="match status" value="1"/>
</dbReference>
<dbReference type="PROSITE" id="PS00571">
    <property type="entry name" value="AMIDASES"/>
    <property type="match status" value="1"/>
</dbReference>
<keyword id="KW-0067">ATP-binding</keyword>
<keyword id="KW-0436">Ligase</keyword>
<keyword id="KW-0547">Nucleotide-binding</keyword>
<keyword id="KW-0648">Protein biosynthesis</keyword>
<keyword id="KW-1185">Reference proteome</keyword>
<comment type="function">
    <text evidence="1">Allows the formation of correctly charged Gln-tRNA(Gln) through the transamidation of misacylated Glu-tRNA(Gln) in organisms which lack glutaminyl-tRNA synthetase. The reaction takes place in the presence of glutamine and ATP through an activated gamma-phospho-Glu-tRNA(Gln).</text>
</comment>
<comment type="catalytic activity">
    <reaction evidence="1">
        <text>L-glutamyl-tRNA(Gln) + L-glutamine + ATP + H2O = L-glutaminyl-tRNA(Gln) + L-glutamate + ADP + phosphate + H(+)</text>
        <dbReference type="Rhea" id="RHEA:17521"/>
        <dbReference type="Rhea" id="RHEA-COMP:9681"/>
        <dbReference type="Rhea" id="RHEA-COMP:9684"/>
        <dbReference type="ChEBI" id="CHEBI:15377"/>
        <dbReference type="ChEBI" id="CHEBI:15378"/>
        <dbReference type="ChEBI" id="CHEBI:29985"/>
        <dbReference type="ChEBI" id="CHEBI:30616"/>
        <dbReference type="ChEBI" id="CHEBI:43474"/>
        <dbReference type="ChEBI" id="CHEBI:58359"/>
        <dbReference type="ChEBI" id="CHEBI:78520"/>
        <dbReference type="ChEBI" id="CHEBI:78521"/>
        <dbReference type="ChEBI" id="CHEBI:456216"/>
        <dbReference type="EC" id="6.3.5.7"/>
    </reaction>
</comment>
<comment type="subunit">
    <text evidence="1">Heterotrimer of A, B and C subunits.</text>
</comment>
<comment type="similarity">
    <text evidence="1">Belongs to the amidase family. GatA subfamily.</text>
</comment>
<feature type="chain" id="PRO_1000015902" description="Glutamyl-tRNA(Gln) amidotransferase subunit A">
    <location>
        <begin position="1"/>
        <end position="481"/>
    </location>
</feature>
<feature type="active site" description="Charge relay system" evidence="1">
    <location>
        <position position="77"/>
    </location>
</feature>
<feature type="active site" description="Charge relay system" evidence="1">
    <location>
        <position position="151"/>
    </location>
</feature>
<feature type="active site" description="Acyl-ester intermediate" evidence="1">
    <location>
        <position position="175"/>
    </location>
</feature>
<organism>
    <name type="scientific">Rubrobacter xylanophilus (strain DSM 9941 / JCM 11954 / NBRC 16129 / PRD-1)</name>
    <dbReference type="NCBI Taxonomy" id="266117"/>
    <lineage>
        <taxon>Bacteria</taxon>
        <taxon>Bacillati</taxon>
        <taxon>Actinomycetota</taxon>
        <taxon>Rubrobacteria</taxon>
        <taxon>Rubrobacterales</taxon>
        <taxon>Rubrobacteraceae</taxon>
        <taxon>Rubrobacter</taxon>
    </lineage>
</organism>
<name>GATA_RUBXD</name>